<evidence type="ECO:0000269" key="1">
    <source>
    </source>
</evidence>
<evidence type="ECO:0000269" key="2">
    <source>
    </source>
</evidence>
<evidence type="ECO:0000269" key="3">
    <source>
    </source>
</evidence>
<evidence type="ECO:0000269" key="4">
    <source>
    </source>
</evidence>
<evidence type="ECO:0000269" key="5">
    <source>
    </source>
</evidence>
<evidence type="ECO:0000269" key="6">
    <source>
    </source>
</evidence>
<evidence type="ECO:0000269" key="7">
    <source>
    </source>
</evidence>
<evidence type="ECO:0000303" key="8">
    <source>
    </source>
</evidence>
<evidence type="ECO:0000303" key="9">
    <source>
    </source>
</evidence>
<evidence type="ECO:0000303" key="10">
    <source>
    </source>
</evidence>
<evidence type="ECO:0000303" key="11">
    <source>
    </source>
</evidence>
<evidence type="ECO:0000305" key="12"/>
<evidence type="ECO:0000305" key="13">
    <source>
    </source>
</evidence>
<evidence type="ECO:0000305" key="14">
    <source>
    </source>
</evidence>
<evidence type="ECO:0007744" key="15">
    <source>
        <dbReference type="PDB" id="1CVO"/>
    </source>
</evidence>
<evidence type="ECO:0007744" key="16">
    <source>
        <dbReference type="PDB" id="1KXI"/>
    </source>
</evidence>
<evidence type="ECO:0007829" key="17">
    <source>
        <dbReference type="PDB" id="1KXI"/>
    </source>
</evidence>
<proteinExistence type="evidence at protein level"/>
<feature type="signal peptide" evidence="3">
    <location>
        <begin position="1"/>
        <end position="21"/>
    </location>
</feature>
<feature type="chain" id="PRO_0000035404" description="Cytotoxin A5" evidence="13">
    <location>
        <begin position="22"/>
        <end position="83"/>
    </location>
</feature>
<feature type="disulfide bond" evidence="5 7 15 16">
    <location>
        <begin position="24"/>
        <end position="43"/>
    </location>
</feature>
<feature type="disulfide bond" evidence="5 7 15 16">
    <location>
        <begin position="36"/>
        <end position="61"/>
    </location>
</feature>
<feature type="disulfide bond" evidence="5 7 15 16">
    <location>
        <begin position="65"/>
        <end position="76"/>
    </location>
</feature>
<feature type="disulfide bond" evidence="5 7 15 16">
    <location>
        <begin position="77"/>
        <end position="82"/>
    </location>
</feature>
<feature type="strand" evidence="17">
    <location>
        <begin position="23"/>
        <end position="25"/>
    </location>
</feature>
<feature type="strand" evidence="17">
    <location>
        <begin position="27"/>
        <end position="31"/>
    </location>
</feature>
<feature type="strand" evidence="17">
    <location>
        <begin position="33"/>
        <end position="35"/>
    </location>
</feature>
<feature type="strand" evidence="17">
    <location>
        <begin position="42"/>
        <end position="51"/>
    </location>
</feature>
<feature type="strand" evidence="17">
    <location>
        <begin position="57"/>
        <end position="64"/>
    </location>
</feature>
<feature type="strand" evidence="17">
    <location>
        <begin position="70"/>
        <end position="77"/>
    </location>
</feature>
<sequence>MKTLLLTMVVVTIVCLDLGYTLKCHNTQLPFIYKTCPEGKNLCFKATLKKFPLKFPVKRGCADNCPKNSALLKYVCCSTDKCN</sequence>
<name>3SOF5_NAJAT</name>
<comment type="function">
    <text evidence="1 2 4 6">Non-cytotoxic protein that does not show lytic and hemolytic activities, but can induce aggregation and fusion of sphingomyelin vesicles (PubMed:8182052). It binds to integrin alpha-V/beta-3 (ITGAV/ITGB3) with high affinity, and it inhibits osteoclast differentiation and bone resorption in mice, probably due to binding to integrin alpha-V/beta-3 (PubMed:16407244).</text>
</comment>
<comment type="subcellular location">
    <subcellularLocation>
        <location evidence="3">Secreted</location>
    </subcellularLocation>
    <subcellularLocation>
        <location evidence="6">Target cell membrane</location>
    </subcellularLocation>
</comment>
<comment type="tissue specificity">
    <text evidence="12">Expressed by the venom gland.</text>
</comment>
<comment type="miscellaneous">
    <text evidence="14">Is classified as a P-type cytotoxin, since a proline residue stands at position 52 (Pro-31 in standard classification).</text>
</comment>
<comment type="similarity">
    <text evidence="12">Belongs to the three-finger toxin family. Short-chain subfamily. Orphan group XV sub-subfamily.</text>
</comment>
<organism>
    <name type="scientific">Naja atra</name>
    <name type="common">Chinese cobra</name>
    <dbReference type="NCBI Taxonomy" id="8656"/>
    <lineage>
        <taxon>Eukaryota</taxon>
        <taxon>Metazoa</taxon>
        <taxon>Chordata</taxon>
        <taxon>Craniata</taxon>
        <taxon>Vertebrata</taxon>
        <taxon>Euteleostomi</taxon>
        <taxon>Lepidosauria</taxon>
        <taxon>Squamata</taxon>
        <taxon>Bifurcata</taxon>
        <taxon>Unidentata</taxon>
        <taxon>Episquamata</taxon>
        <taxon>Toxicofera</taxon>
        <taxon>Serpentes</taxon>
        <taxon>Colubroidea</taxon>
        <taxon>Elapidae</taxon>
        <taxon>Elapinae</taxon>
        <taxon>Naja</taxon>
    </lineage>
</organism>
<keyword id="KW-0002">3D-structure</keyword>
<keyword id="KW-0903">Direct protein sequencing</keyword>
<keyword id="KW-1015">Disulfide bond</keyword>
<keyword id="KW-0472">Membrane</keyword>
<keyword id="KW-0964">Secreted</keyword>
<keyword id="KW-0732">Signal</keyword>
<keyword id="KW-1052">Target cell membrane</keyword>
<keyword id="KW-1053">Target membrane</keyword>
<keyword id="KW-0800">Toxin</keyword>
<dbReference type="EMBL" id="Z54228">
    <property type="protein sequence ID" value="CAA90964.1"/>
    <property type="molecule type" value="mRNA"/>
</dbReference>
<dbReference type="PDB" id="1CVO">
    <property type="method" value="NMR"/>
    <property type="chains" value="A=22-83"/>
</dbReference>
<dbReference type="PDB" id="1KXI">
    <property type="method" value="X-ray"/>
    <property type="resolution" value="2.19 A"/>
    <property type="chains" value="A/B=22-83"/>
</dbReference>
<dbReference type="PDBsum" id="1CVO"/>
<dbReference type="PDBsum" id="1KXI"/>
<dbReference type="BMRB" id="P62375"/>
<dbReference type="SMR" id="P62375"/>
<dbReference type="EvolutionaryTrace" id="P62375"/>
<dbReference type="GO" id="GO:0005576">
    <property type="term" value="C:extracellular region"/>
    <property type="evidence" value="ECO:0007669"/>
    <property type="project" value="UniProtKB-SubCell"/>
</dbReference>
<dbReference type="GO" id="GO:0016020">
    <property type="term" value="C:membrane"/>
    <property type="evidence" value="ECO:0007669"/>
    <property type="project" value="UniProtKB-KW"/>
</dbReference>
<dbReference type="GO" id="GO:0044218">
    <property type="term" value="C:other organism cell membrane"/>
    <property type="evidence" value="ECO:0007669"/>
    <property type="project" value="UniProtKB-KW"/>
</dbReference>
<dbReference type="GO" id="GO:0090729">
    <property type="term" value="F:toxin activity"/>
    <property type="evidence" value="ECO:0007669"/>
    <property type="project" value="UniProtKB-KW"/>
</dbReference>
<dbReference type="CDD" id="cd00206">
    <property type="entry name" value="TFP_snake_toxin"/>
    <property type="match status" value="1"/>
</dbReference>
<dbReference type="FunFam" id="2.10.60.10:FF:000024">
    <property type="entry name" value="Cytotoxin 1"/>
    <property type="match status" value="1"/>
</dbReference>
<dbReference type="Gene3D" id="2.10.60.10">
    <property type="entry name" value="CD59"/>
    <property type="match status" value="1"/>
</dbReference>
<dbReference type="InterPro" id="IPR003572">
    <property type="entry name" value="Cytotoxin_Cobra"/>
</dbReference>
<dbReference type="InterPro" id="IPR003571">
    <property type="entry name" value="Snake_3FTx"/>
</dbReference>
<dbReference type="InterPro" id="IPR045860">
    <property type="entry name" value="Snake_toxin-like_sf"/>
</dbReference>
<dbReference type="InterPro" id="IPR018354">
    <property type="entry name" value="Snake_toxin_con_site"/>
</dbReference>
<dbReference type="InterPro" id="IPR054131">
    <property type="entry name" value="Toxin_cobra-type"/>
</dbReference>
<dbReference type="Pfam" id="PF21947">
    <property type="entry name" value="Toxin_cobra-type"/>
    <property type="match status" value="1"/>
</dbReference>
<dbReference type="PRINTS" id="PR00282">
    <property type="entry name" value="CYTOTOXIN"/>
</dbReference>
<dbReference type="SUPFAM" id="SSF57302">
    <property type="entry name" value="Snake toxin-like"/>
    <property type="match status" value="1"/>
</dbReference>
<dbReference type="PROSITE" id="PS00272">
    <property type="entry name" value="SNAKE_TOXIN"/>
    <property type="match status" value="1"/>
</dbReference>
<reference key="1">
    <citation type="journal article" date="1996" name="Biochim. Biophys. Acta">
        <title>cDNA sequence analysis and expression of cardiotoxin V and a new cardiotoxin VII from Naja naja atra (Taiwan cobra).</title>
        <authorList>
            <person name="Chang L.-S."/>
            <person name="Lin J."/>
            <person name="Wu P.F."/>
        </authorList>
    </citation>
    <scope>NUCLEOTIDE SEQUENCE [MRNA]</scope>
    <source>
        <tissue>Venom gland</tissue>
    </source>
</reference>
<reference key="2">
    <citation type="journal article" date="1985" name="Biochem. Int.">
        <title>Amino acid sequence of a cardiotoxin-like basic polypeptide (CLBP) with low cytotoxic activity isolated from the venom of the Formosan cobra (Naja naja atra).</title>
        <authorList>
            <person name="Takechi M."/>
            <person name="Tanaka Y."/>
            <person name="Hayashi K."/>
        </authorList>
    </citation>
    <scope>PRELIMINARY PROTEIN SEQUENCE OF 22-83</scope>
    <scope>SUBCELLULAR LOCATION</scope>
    <source>
        <tissue>Venom</tissue>
    </source>
</reference>
<reference key="3">
    <citation type="journal article" date="1994" name="J. Biol. Chem.">
        <title>Two distinct types of cardiotoxin as revealed by the structure and activity relationship of their interaction with zwitterionic phospholipid dispersions.</title>
        <authorList>
            <person name="Chien K.-Y."/>
            <person name="Chiang C.-M."/>
            <person name="Hseu Y.-C."/>
            <person name="Vyas A.A."/>
            <person name="Rule G.S."/>
            <person name="Wu W.-G."/>
        </authorList>
    </citation>
    <scope>FUNCTION</scope>
    <scope>P-TYPE CYTOTOXIN GROUP MISASSIGNATION</scope>
</reference>
<reference key="4">
    <citation type="journal article" date="1996" name="Biochemistry">
        <title>Conformational change and inactivation of membrane phospholipid-related activity of cardiotoxin V from Taiwan cobra venom at acidic pH.</title>
        <authorList>
            <person name="Chiang C.-M."/>
            <person name="Chien K.-Y."/>
            <person name="Lin H.-J."/>
            <person name="Lin J.-F."/>
            <person name="Yeh H.-C."/>
            <person name="Ho P.-L."/>
            <person name="Wu W.-G."/>
        </authorList>
    </citation>
    <scope>FUNCTION</scope>
    <scope>INACTIVATION BY ACIDIC PH</scope>
</reference>
<reference key="5">
    <citation type="journal article" date="1996" name="Biochemistry">
        <title>The role of acidic amino acid residues in the structural stability of snake cardiotoxins.</title>
        <authorList>
            <person name="Chiang C.-M."/>
            <person name="Chang S.-L."/>
            <person name="Lin H.-J."/>
            <person name="Wu W.-G."/>
        </authorList>
    </citation>
    <scope>ROLE OF ACIDIC AMINO ACID RESIDUES</scope>
</reference>
<reference key="6">
    <citation type="journal article" date="2003" name="Bioorg. Khim.">
        <title>Interaction of cardiotoxin A5 with a membrane: role of conformational heterogeneity and hydrophilic properties.</title>
        <authorList>
            <person name="Konshina A.G."/>
            <person name="Volynskii P.E."/>
            <person name="Arsen'ev A.S."/>
            <person name="Efremov R.G."/>
        </authorList>
    </citation>
    <scope>FUNCTION</scope>
</reference>
<reference key="7">
    <citation type="journal article" date="2006" name="J. Biol. Chem.">
        <title>Non-cytotoxic cobra cardiotoxin A5 binds to alpha(v)beta3 integrin and inhibits bone resorption. Identification of cardiotoxins as non-RGD integrin-binding proteins of the Ly-6 family.</title>
        <authorList>
            <person name="Wu P.-L."/>
            <person name="Lee S.-C."/>
            <person name="Chuang C.-C."/>
            <person name="Mori S."/>
            <person name="Akakura N."/>
            <person name="Wu W.-G."/>
            <person name="Takada Y."/>
        </authorList>
    </citation>
    <scope>FUNCTION</scope>
    <scope>BINDING TO INTEGRIN ALPHA-V/BETA-3</scope>
</reference>
<reference key="8">
    <citation type="journal article" date="1993" name="Biochemistry">
        <title>Solution structure of cardiotoxin V from Naja naja atra.</title>
        <authorList>
            <person name="Singhal A.K."/>
            <person name="Chien K.-Y."/>
            <person name="Wu W.-G."/>
            <person name="Rule G.S."/>
        </authorList>
    </citation>
    <scope>STRUCTURE BY NMR OF 22-83</scope>
    <scope>DISULFIDE BONDS</scope>
</reference>
<reference key="9">
    <citation type="journal article" date="1997" name="Biochemistry">
        <title>Crystal structure of cardiotoxin V from Taiwan cobra venom: pH-dependent conformational change and a novel membrane-binding motif identified in the three-finger loops of P-type cardiotoxin.</title>
        <authorList>
            <person name="Sun Y.-J."/>
            <person name="Wu W.-G."/>
            <person name="Chiang C.-M."/>
            <person name="Hsin A.-Y."/>
            <person name="Hsiao C.-D."/>
        </authorList>
    </citation>
    <scope>X-RAY CRYSTALLOGRAPHY (2.19 ANGSTROMS) OF 22-83</scope>
    <scope>DISULFIDE BONDS</scope>
    <source>
        <tissue>Venom</tissue>
    </source>
</reference>
<accession>P62375</accession>
<accession>P14554</accession>
<protein>
    <recommendedName>
        <fullName evidence="12">Cytotoxin A5</fullName>
    </recommendedName>
    <alternativeName>
        <fullName evidence="10">CTX A5</fullName>
        <shortName evidence="8">CT A5</shortName>
    </alternativeName>
    <alternativeName>
        <fullName evidence="8 10">Cardiotoxin A5</fullName>
    </alternativeName>
    <alternativeName>
        <fullName evidence="11">Cardiotoxin V</fullName>
        <shortName>CTX V</shortName>
        <shortName>CTXV</shortName>
    </alternativeName>
    <alternativeName>
        <fullName evidence="9">Cardiotoxin-like basic polypeptide</fullName>
        <shortName evidence="9">CLBP</shortName>
    </alternativeName>
</protein>